<gene>
    <name evidence="1" type="primary">atpC</name>
    <name type="ordered locus">DNO_1141</name>
</gene>
<comment type="function">
    <text evidence="1">Produces ATP from ADP in the presence of a proton gradient across the membrane.</text>
</comment>
<comment type="subunit">
    <text evidence="1">F-type ATPases have 2 components, CF(1) - the catalytic core - and CF(0) - the membrane proton channel. CF(1) has five subunits: alpha(3), beta(3), gamma(1), delta(1), epsilon(1). CF(0) has three main subunits: a, b and c.</text>
</comment>
<comment type="subcellular location">
    <subcellularLocation>
        <location evidence="1">Cell inner membrane</location>
        <topology evidence="1">Peripheral membrane protein</topology>
    </subcellularLocation>
</comment>
<comment type="similarity">
    <text evidence="1">Belongs to the ATPase epsilon chain family.</text>
</comment>
<dbReference type="EMBL" id="CP000513">
    <property type="protein sequence ID" value="ABQ14301.1"/>
    <property type="molecule type" value="Genomic_DNA"/>
</dbReference>
<dbReference type="SMR" id="A5EXL3"/>
<dbReference type="STRING" id="246195.DNO_1141"/>
<dbReference type="KEGG" id="dno:DNO_1141"/>
<dbReference type="eggNOG" id="COG0355">
    <property type="taxonomic scope" value="Bacteria"/>
</dbReference>
<dbReference type="HOGENOM" id="CLU_084338_2_0_6"/>
<dbReference type="OrthoDB" id="9791445at2"/>
<dbReference type="Proteomes" id="UP000000248">
    <property type="component" value="Chromosome"/>
</dbReference>
<dbReference type="GO" id="GO:0005886">
    <property type="term" value="C:plasma membrane"/>
    <property type="evidence" value="ECO:0007669"/>
    <property type="project" value="UniProtKB-SubCell"/>
</dbReference>
<dbReference type="GO" id="GO:0045259">
    <property type="term" value="C:proton-transporting ATP synthase complex"/>
    <property type="evidence" value="ECO:0007669"/>
    <property type="project" value="UniProtKB-KW"/>
</dbReference>
<dbReference type="GO" id="GO:0005524">
    <property type="term" value="F:ATP binding"/>
    <property type="evidence" value="ECO:0007669"/>
    <property type="project" value="UniProtKB-UniRule"/>
</dbReference>
<dbReference type="GO" id="GO:0046933">
    <property type="term" value="F:proton-transporting ATP synthase activity, rotational mechanism"/>
    <property type="evidence" value="ECO:0007669"/>
    <property type="project" value="UniProtKB-UniRule"/>
</dbReference>
<dbReference type="CDD" id="cd12152">
    <property type="entry name" value="F1-ATPase_delta"/>
    <property type="match status" value="1"/>
</dbReference>
<dbReference type="FunFam" id="2.60.15.10:FF:000001">
    <property type="entry name" value="ATP synthase epsilon chain"/>
    <property type="match status" value="1"/>
</dbReference>
<dbReference type="Gene3D" id="1.20.5.440">
    <property type="entry name" value="ATP synthase delta/epsilon subunit, C-terminal domain"/>
    <property type="match status" value="1"/>
</dbReference>
<dbReference type="Gene3D" id="2.60.15.10">
    <property type="entry name" value="F0F1 ATP synthase delta/epsilon subunit, N-terminal"/>
    <property type="match status" value="1"/>
</dbReference>
<dbReference type="HAMAP" id="MF_00530">
    <property type="entry name" value="ATP_synth_epsil_bac"/>
    <property type="match status" value="1"/>
</dbReference>
<dbReference type="InterPro" id="IPR036794">
    <property type="entry name" value="ATP_F1_dsu/esu_C_sf"/>
</dbReference>
<dbReference type="InterPro" id="IPR001469">
    <property type="entry name" value="ATP_synth_F1_dsu/esu"/>
</dbReference>
<dbReference type="InterPro" id="IPR020546">
    <property type="entry name" value="ATP_synth_F1_dsu/esu_N"/>
</dbReference>
<dbReference type="InterPro" id="IPR036771">
    <property type="entry name" value="ATPsynth_dsu/esu_N"/>
</dbReference>
<dbReference type="NCBIfam" id="TIGR01216">
    <property type="entry name" value="ATP_synt_epsi"/>
    <property type="match status" value="1"/>
</dbReference>
<dbReference type="NCBIfam" id="NF001847">
    <property type="entry name" value="PRK00571.1-4"/>
    <property type="match status" value="1"/>
</dbReference>
<dbReference type="PANTHER" id="PTHR13822">
    <property type="entry name" value="ATP SYNTHASE DELTA/EPSILON CHAIN"/>
    <property type="match status" value="1"/>
</dbReference>
<dbReference type="PANTHER" id="PTHR13822:SF10">
    <property type="entry name" value="ATP SYNTHASE EPSILON CHAIN, CHLOROPLASTIC"/>
    <property type="match status" value="1"/>
</dbReference>
<dbReference type="Pfam" id="PF02823">
    <property type="entry name" value="ATP-synt_DE_N"/>
    <property type="match status" value="1"/>
</dbReference>
<dbReference type="SUPFAM" id="SSF46604">
    <property type="entry name" value="Epsilon subunit of F1F0-ATP synthase C-terminal domain"/>
    <property type="match status" value="1"/>
</dbReference>
<dbReference type="SUPFAM" id="SSF51344">
    <property type="entry name" value="Epsilon subunit of F1F0-ATP synthase N-terminal domain"/>
    <property type="match status" value="1"/>
</dbReference>
<protein>
    <recommendedName>
        <fullName evidence="1">ATP synthase epsilon chain</fullName>
    </recommendedName>
    <alternativeName>
        <fullName evidence="1">ATP synthase F1 sector epsilon subunit</fullName>
    </alternativeName>
    <alternativeName>
        <fullName evidence="1">F-ATPase epsilon subunit</fullName>
    </alternativeName>
</protein>
<feature type="chain" id="PRO_1000056480" description="ATP synthase epsilon chain">
    <location>
        <begin position="1"/>
        <end position="143"/>
    </location>
</feature>
<sequence>MSTPFQVYIVSPDRALFSGEVVQIVAPAEYGELGILSNHIPLIATLKPGQVRLTKSDGEEEVLYVSGGFIEVQSKQTIILADEAARAAELDEEKIKEAKARAEKLIKSPDGEINYERMKNYEKMQIELVQLTAQLAAIRRHRQ</sequence>
<reference key="1">
    <citation type="journal article" date="2007" name="Nat. Biotechnol.">
        <title>Genome sequence and identification of candidate vaccine antigens from the animal pathogen Dichelobacter nodosus.</title>
        <authorList>
            <person name="Myers G.S.A."/>
            <person name="Parker D."/>
            <person name="Al-Hasani K."/>
            <person name="Kennan R.M."/>
            <person name="Seemann T."/>
            <person name="Ren Q."/>
            <person name="Badger J.H."/>
            <person name="Selengut J.D."/>
            <person name="Deboy R.T."/>
            <person name="Tettelin H."/>
            <person name="Boyce J.D."/>
            <person name="McCarl V.P."/>
            <person name="Han X."/>
            <person name="Nelson W.C."/>
            <person name="Madupu R."/>
            <person name="Mohamoud Y."/>
            <person name="Holley T."/>
            <person name="Fedorova N."/>
            <person name="Khouri H."/>
            <person name="Bottomley S.P."/>
            <person name="Whittington R.J."/>
            <person name="Adler B."/>
            <person name="Songer J.G."/>
            <person name="Rood J.I."/>
            <person name="Paulsen I.T."/>
        </authorList>
    </citation>
    <scope>NUCLEOTIDE SEQUENCE [LARGE SCALE GENOMIC DNA]</scope>
    <source>
        <strain>VCS1703A</strain>
    </source>
</reference>
<keyword id="KW-0066">ATP synthesis</keyword>
<keyword id="KW-0997">Cell inner membrane</keyword>
<keyword id="KW-1003">Cell membrane</keyword>
<keyword id="KW-0139">CF(1)</keyword>
<keyword id="KW-0375">Hydrogen ion transport</keyword>
<keyword id="KW-0406">Ion transport</keyword>
<keyword id="KW-0472">Membrane</keyword>
<keyword id="KW-1185">Reference proteome</keyword>
<keyword id="KW-0813">Transport</keyword>
<proteinExistence type="inferred from homology"/>
<evidence type="ECO:0000255" key="1">
    <source>
        <dbReference type="HAMAP-Rule" id="MF_00530"/>
    </source>
</evidence>
<organism>
    <name type="scientific">Dichelobacter nodosus (strain VCS1703A)</name>
    <dbReference type="NCBI Taxonomy" id="246195"/>
    <lineage>
        <taxon>Bacteria</taxon>
        <taxon>Pseudomonadati</taxon>
        <taxon>Pseudomonadota</taxon>
        <taxon>Gammaproteobacteria</taxon>
        <taxon>Cardiobacteriales</taxon>
        <taxon>Cardiobacteriaceae</taxon>
        <taxon>Dichelobacter</taxon>
    </lineage>
</organism>
<name>ATPE_DICNV</name>
<accession>A5EXL3</accession>